<accession>O13568</accession>
<reference key="1">
    <citation type="journal article" date="1997" name="Nature">
        <title>The nucleotide sequence of Saccharomyces cerevisiae chromosome XVI.</title>
        <authorList>
            <person name="Bussey H."/>
            <person name="Storms R.K."/>
            <person name="Ahmed A."/>
            <person name="Albermann K."/>
            <person name="Allen E."/>
            <person name="Ansorge W."/>
            <person name="Araujo R."/>
            <person name="Aparicio A."/>
            <person name="Barrell B.G."/>
            <person name="Badcock K."/>
            <person name="Benes V."/>
            <person name="Botstein D."/>
            <person name="Bowman S."/>
            <person name="Brueckner M."/>
            <person name="Carpenter J."/>
            <person name="Cherry J.M."/>
            <person name="Chung E."/>
            <person name="Churcher C.M."/>
            <person name="Coster F."/>
            <person name="Davis K."/>
            <person name="Davis R.W."/>
            <person name="Dietrich F.S."/>
            <person name="Delius H."/>
            <person name="DiPaolo T."/>
            <person name="Dubois E."/>
            <person name="Duesterhoeft A."/>
            <person name="Duncan M."/>
            <person name="Floeth M."/>
            <person name="Fortin N."/>
            <person name="Friesen J.D."/>
            <person name="Fritz C."/>
            <person name="Goffeau A."/>
            <person name="Hall J."/>
            <person name="Hebling U."/>
            <person name="Heumann K."/>
            <person name="Hilbert H."/>
            <person name="Hillier L.W."/>
            <person name="Hunicke-Smith S."/>
            <person name="Hyman R.W."/>
            <person name="Johnston M."/>
            <person name="Kalman S."/>
            <person name="Kleine K."/>
            <person name="Komp C."/>
            <person name="Kurdi O."/>
            <person name="Lashkari D."/>
            <person name="Lew H."/>
            <person name="Lin A."/>
            <person name="Lin D."/>
            <person name="Louis E.J."/>
            <person name="Marathe R."/>
            <person name="Messenguy F."/>
            <person name="Mewes H.-W."/>
            <person name="Mirtipati S."/>
            <person name="Moestl D."/>
            <person name="Mueller-Auer S."/>
            <person name="Namath A."/>
            <person name="Nentwich U."/>
            <person name="Oefner P."/>
            <person name="Pearson D."/>
            <person name="Petel F.X."/>
            <person name="Pohl T.M."/>
            <person name="Purnelle B."/>
            <person name="Rajandream M.A."/>
            <person name="Rechmann S."/>
            <person name="Rieger M."/>
            <person name="Riles L."/>
            <person name="Roberts D."/>
            <person name="Schaefer M."/>
            <person name="Scharfe M."/>
            <person name="Scherens B."/>
            <person name="Schramm S."/>
            <person name="Schroeder M."/>
            <person name="Sdicu A.-M."/>
            <person name="Tettelin H."/>
            <person name="Urrestarazu L.A."/>
            <person name="Ushinsky S."/>
            <person name="Vierendeels F."/>
            <person name="Vissers S."/>
            <person name="Voss H."/>
            <person name="Walsh S.V."/>
            <person name="Wambutt R."/>
            <person name="Wang Y."/>
            <person name="Wedler E."/>
            <person name="Wedler H."/>
            <person name="Winnett E."/>
            <person name="Zhong W.-W."/>
            <person name="Zollner A."/>
            <person name="Vo D.H."/>
            <person name="Hani J."/>
        </authorList>
    </citation>
    <scope>NUCLEOTIDE SEQUENCE [LARGE SCALE GENOMIC DNA]</scope>
    <source>
        <strain>ATCC 204508 / S288c</strain>
    </source>
</reference>
<reference key="2">
    <citation type="journal article" date="2014" name="G3 (Bethesda)">
        <title>The reference genome sequence of Saccharomyces cerevisiae: Then and now.</title>
        <authorList>
            <person name="Engel S.R."/>
            <person name="Dietrich F.S."/>
            <person name="Fisk D.G."/>
            <person name="Binkley G."/>
            <person name="Balakrishnan R."/>
            <person name="Costanzo M.C."/>
            <person name="Dwight S.S."/>
            <person name="Hitz B.C."/>
            <person name="Karra K."/>
            <person name="Nash R.S."/>
            <person name="Weng S."/>
            <person name="Wong E.D."/>
            <person name="Lloyd P."/>
            <person name="Skrzypek M.S."/>
            <person name="Miyasato S.R."/>
            <person name="Simison M."/>
            <person name="Cherry J.M."/>
        </authorList>
    </citation>
    <scope>GENOME REANNOTATION</scope>
    <source>
        <strain>ATCC 204508 / S288c</strain>
    </source>
</reference>
<reference key="3">
    <citation type="journal article" date="2007" name="Genome Res.">
        <title>Approaching a complete repository of sequence-verified protein-encoding clones for Saccharomyces cerevisiae.</title>
        <authorList>
            <person name="Hu Y."/>
            <person name="Rolfs A."/>
            <person name="Bhullar B."/>
            <person name="Murthy T.V.S."/>
            <person name="Zhu C."/>
            <person name="Berger M.F."/>
            <person name="Camargo A.A."/>
            <person name="Kelley F."/>
            <person name="McCarron S."/>
            <person name="Jepson D."/>
            <person name="Richardson A."/>
            <person name="Raphael J."/>
            <person name="Moreira D."/>
            <person name="Taycher E."/>
            <person name="Zuo D."/>
            <person name="Mohr S."/>
            <person name="Kane M.F."/>
            <person name="Williamson J."/>
            <person name="Simpson A.J.G."/>
            <person name="Bulyk M.L."/>
            <person name="Harlow E."/>
            <person name="Marsischky G."/>
            <person name="Kolodner R.D."/>
            <person name="LaBaer J."/>
        </authorList>
    </citation>
    <scope>NUCLEOTIDE SEQUENCE [GENOMIC DNA]</scope>
    <source>
        <strain>ATCC 204508 / S288c</strain>
    </source>
</reference>
<protein>
    <recommendedName>
        <fullName>Putative uncharacterized protein YPR130C</fullName>
    </recommendedName>
</protein>
<proteinExistence type="uncertain"/>
<name>YP130_YEAST</name>
<dbReference type="EMBL" id="U40829">
    <property type="protein sequence ID" value="AAB68291.1"/>
    <property type="molecule type" value="Genomic_DNA"/>
</dbReference>
<dbReference type="EMBL" id="AY693277">
    <property type="protein sequence ID" value="AAT93296.1"/>
    <property type="molecule type" value="Genomic_DNA"/>
</dbReference>
<dbReference type="PIR" id="S69464">
    <property type="entry name" value="S69464"/>
</dbReference>
<dbReference type="SMR" id="O13568"/>
<dbReference type="DIP" id="DIP-5053N"/>
<dbReference type="IntAct" id="O13568">
    <property type="interactions" value="1"/>
</dbReference>
<dbReference type="PaxDb" id="4932-YPR130C"/>
<dbReference type="TopDownProteomics" id="O13568"/>
<dbReference type="EnsemblFungi" id="YPR130C_mRNA">
    <property type="protein sequence ID" value="YPR130C"/>
    <property type="gene ID" value="YPR130C"/>
</dbReference>
<dbReference type="AGR" id="SGD:S000006334"/>
<dbReference type="SGD" id="S000006334">
    <property type="gene designation" value="YPR130C"/>
</dbReference>
<dbReference type="HOGENOM" id="CLU_1887365_0_0_1"/>
<dbReference type="GO" id="GO:0016020">
    <property type="term" value="C:membrane"/>
    <property type="evidence" value="ECO:0007669"/>
    <property type="project" value="UniProtKB-SubCell"/>
</dbReference>
<comment type="subcellular location">
    <subcellularLocation>
        <location evidence="2">Membrane</location>
        <topology evidence="2">Single-pass membrane protein</topology>
    </subcellularLocation>
</comment>
<comment type="miscellaneous">
    <text evidence="2">Almost completely overlaps SCD6.</text>
</comment>
<comment type="caution">
    <text evidence="3">Product of a dubious gene prediction unlikely to encode a functional protein. Because of that it is not part of the S.cerevisiae S288c complete/reference proteome set.</text>
</comment>
<organism>
    <name type="scientific">Saccharomyces cerevisiae (strain ATCC 204508 / S288c)</name>
    <name type="common">Baker's yeast</name>
    <dbReference type="NCBI Taxonomy" id="559292"/>
    <lineage>
        <taxon>Eukaryota</taxon>
        <taxon>Fungi</taxon>
        <taxon>Dikarya</taxon>
        <taxon>Ascomycota</taxon>
        <taxon>Saccharomycotina</taxon>
        <taxon>Saccharomycetes</taxon>
        <taxon>Saccharomycetales</taxon>
        <taxon>Saccharomycetaceae</taxon>
        <taxon>Saccharomyces</taxon>
    </lineage>
</organism>
<feature type="chain" id="PRO_0000299827" description="Putative uncharacterized protein YPR130C">
    <location>
        <begin position="1"/>
        <end position="135"/>
    </location>
</feature>
<feature type="transmembrane region" description="Helical" evidence="1">
    <location>
        <begin position="35"/>
        <end position="55"/>
    </location>
</feature>
<evidence type="ECO:0000255" key="1"/>
<evidence type="ECO:0000305" key="2"/>
<evidence type="ECO:0000305" key="3">
    <source>
    </source>
</evidence>
<keyword id="KW-0472">Membrane</keyword>
<keyword id="KW-0812">Transmembrane</keyword>
<keyword id="KW-1133">Transmembrane helix</keyword>
<sequence length="135" mass="14931">MYILNDILNLHRNIILKFNVGRRLRKLVGWSAVRVVLVLIGATIILVVISVLVVSTLAASSSVSSVSPIISTPTTEASRVKSWSGRSLSKGVNVQHFFFLPSHIGISFSRSGDGVEKRRFFIIKLLIRFILLVNS</sequence>
<gene>
    <name type="ordered locus">YPR130C</name>
    <name type="ORF">P9659.10A</name>
</gene>